<organism>
    <name type="scientific">Kocuria rhizophila (strain ATCC 9341 / DSM 348 / NBRC 103217 / DC2201)</name>
    <dbReference type="NCBI Taxonomy" id="378753"/>
    <lineage>
        <taxon>Bacteria</taxon>
        <taxon>Bacillati</taxon>
        <taxon>Actinomycetota</taxon>
        <taxon>Actinomycetes</taxon>
        <taxon>Micrococcales</taxon>
        <taxon>Micrococcaceae</taxon>
        <taxon>Kocuria</taxon>
    </lineage>
</organism>
<feature type="chain" id="PRO_1000141567" description="Large ribosomal subunit protein uL2">
    <location>
        <begin position="1"/>
        <end position="279"/>
    </location>
</feature>
<feature type="region of interest" description="Disordered" evidence="2">
    <location>
        <begin position="30"/>
        <end position="59"/>
    </location>
</feature>
<feature type="region of interest" description="Disordered" evidence="2">
    <location>
        <begin position="225"/>
        <end position="279"/>
    </location>
</feature>
<feature type="compositionally biased region" description="Basic residues" evidence="2">
    <location>
        <begin position="50"/>
        <end position="59"/>
    </location>
</feature>
<feature type="compositionally biased region" description="Basic and acidic residues" evidence="2">
    <location>
        <begin position="253"/>
        <end position="268"/>
    </location>
</feature>
<feature type="compositionally biased region" description="Basic residues" evidence="2">
    <location>
        <begin position="269"/>
        <end position="279"/>
    </location>
</feature>
<gene>
    <name evidence="1" type="primary">rplB</name>
    <name type="ordered locus">KRH_06190</name>
</gene>
<accession>B2GIZ6</accession>
<comment type="function">
    <text evidence="1">One of the primary rRNA binding proteins. Required for association of the 30S and 50S subunits to form the 70S ribosome, for tRNA binding and peptide bond formation. It has been suggested to have peptidyltransferase activity; this is somewhat controversial. Makes several contacts with the 16S rRNA in the 70S ribosome.</text>
</comment>
<comment type="subunit">
    <text evidence="1">Part of the 50S ribosomal subunit. Forms a bridge to the 30S subunit in the 70S ribosome.</text>
</comment>
<comment type="similarity">
    <text evidence="1">Belongs to the universal ribosomal protein uL2 family.</text>
</comment>
<dbReference type="EMBL" id="AP009152">
    <property type="protein sequence ID" value="BAG28966.1"/>
    <property type="molecule type" value="Genomic_DNA"/>
</dbReference>
<dbReference type="RefSeq" id="WP_012397691.1">
    <property type="nucleotide sequence ID" value="NZ_VECX01000001.1"/>
</dbReference>
<dbReference type="SMR" id="B2GIZ6"/>
<dbReference type="STRING" id="378753.KRH_06190"/>
<dbReference type="KEGG" id="krh:KRH_06190"/>
<dbReference type="eggNOG" id="COG0090">
    <property type="taxonomic scope" value="Bacteria"/>
</dbReference>
<dbReference type="HOGENOM" id="CLU_036235_2_1_11"/>
<dbReference type="OrthoDB" id="9778722at2"/>
<dbReference type="Proteomes" id="UP000008838">
    <property type="component" value="Chromosome"/>
</dbReference>
<dbReference type="GO" id="GO:0015934">
    <property type="term" value="C:large ribosomal subunit"/>
    <property type="evidence" value="ECO:0007669"/>
    <property type="project" value="InterPro"/>
</dbReference>
<dbReference type="GO" id="GO:0019843">
    <property type="term" value="F:rRNA binding"/>
    <property type="evidence" value="ECO:0007669"/>
    <property type="project" value="UniProtKB-UniRule"/>
</dbReference>
<dbReference type="GO" id="GO:0003735">
    <property type="term" value="F:structural constituent of ribosome"/>
    <property type="evidence" value="ECO:0007669"/>
    <property type="project" value="InterPro"/>
</dbReference>
<dbReference type="GO" id="GO:0016740">
    <property type="term" value="F:transferase activity"/>
    <property type="evidence" value="ECO:0007669"/>
    <property type="project" value="InterPro"/>
</dbReference>
<dbReference type="GO" id="GO:0002181">
    <property type="term" value="P:cytoplasmic translation"/>
    <property type="evidence" value="ECO:0007669"/>
    <property type="project" value="TreeGrafter"/>
</dbReference>
<dbReference type="FunFam" id="2.30.30.30:FF:000001">
    <property type="entry name" value="50S ribosomal protein L2"/>
    <property type="match status" value="1"/>
</dbReference>
<dbReference type="FunFam" id="2.40.50.140:FF:000003">
    <property type="entry name" value="50S ribosomal protein L2"/>
    <property type="match status" value="1"/>
</dbReference>
<dbReference type="FunFam" id="4.10.950.10:FF:000001">
    <property type="entry name" value="50S ribosomal protein L2"/>
    <property type="match status" value="1"/>
</dbReference>
<dbReference type="Gene3D" id="2.30.30.30">
    <property type="match status" value="1"/>
</dbReference>
<dbReference type="Gene3D" id="2.40.50.140">
    <property type="entry name" value="Nucleic acid-binding proteins"/>
    <property type="match status" value="1"/>
</dbReference>
<dbReference type="Gene3D" id="4.10.950.10">
    <property type="entry name" value="Ribosomal protein L2, domain 3"/>
    <property type="match status" value="1"/>
</dbReference>
<dbReference type="HAMAP" id="MF_01320_B">
    <property type="entry name" value="Ribosomal_uL2_B"/>
    <property type="match status" value="1"/>
</dbReference>
<dbReference type="InterPro" id="IPR012340">
    <property type="entry name" value="NA-bd_OB-fold"/>
</dbReference>
<dbReference type="InterPro" id="IPR014722">
    <property type="entry name" value="Rib_uL2_dom2"/>
</dbReference>
<dbReference type="InterPro" id="IPR002171">
    <property type="entry name" value="Ribosomal_uL2"/>
</dbReference>
<dbReference type="InterPro" id="IPR005880">
    <property type="entry name" value="Ribosomal_uL2_bac/org-type"/>
</dbReference>
<dbReference type="InterPro" id="IPR022669">
    <property type="entry name" value="Ribosomal_uL2_C"/>
</dbReference>
<dbReference type="InterPro" id="IPR022671">
    <property type="entry name" value="Ribosomal_uL2_CS"/>
</dbReference>
<dbReference type="InterPro" id="IPR014726">
    <property type="entry name" value="Ribosomal_uL2_dom3"/>
</dbReference>
<dbReference type="InterPro" id="IPR022666">
    <property type="entry name" value="Ribosomal_uL2_RNA-bd_dom"/>
</dbReference>
<dbReference type="InterPro" id="IPR008991">
    <property type="entry name" value="Translation_prot_SH3-like_sf"/>
</dbReference>
<dbReference type="NCBIfam" id="TIGR01171">
    <property type="entry name" value="rplB_bact"/>
    <property type="match status" value="1"/>
</dbReference>
<dbReference type="PANTHER" id="PTHR13691:SF5">
    <property type="entry name" value="LARGE RIBOSOMAL SUBUNIT PROTEIN UL2M"/>
    <property type="match status" value="1"/>
</dbReference>
<dbReference type="PANTHER" id="PTHR13691">
    <property type="entry name" value="RIBOSOMAL PROTEIN L2"/>
    <property type="match status" value="1"/>
</dbReference>
<dbReference type="Pfam" id="PF00181">
    <property type="entry name" value="Ribosomal_L2"/>
    <property type="match status" value="1"/>
</dbReference>
<dbReference type="Pfam" id="PF03947">
    <property type="entry name" value="Ribosomal_L2_C"/>
    <property type="match status" value="1"/>
</dbReference>
<dbReference type="PIRSF" id="PIRSF002158">
    <property type="entry name" value="Ribosomal_L2"/>
    <property type="match status" value="1"/>
</dbReference>
<dbReference type="SMART" id="SM01383">
    <property type="entry name" value="Ribosomal_L2"/>
    <property type="match status" value="1"/>
</dbReference>
<dbReference type="SMART" id="SM01382">
    <property type="entry name" value="Ribosomal_L2_C"/>
    <property type="match status" value="1"/>
</dbReference>
<dbReference type="SUPFAM" id="SSF50249">
    <property type="entry name" value="Nucleic acid-binding proteins"/>
    <property type="match status" value="1"/>
</dbReference>
<dbReference type="SUPFAM" id="SSF50104">
    <property type="entry name" value="Translation proteins SH3-like domain"/>
    <property type="match status" value="1"/>
</dbReference>
<dbReference type="PROSITE" id="PS00467">
    <property type="entry name" value="RIBOSOMAL_L2"/>
    <property type="match status" value="1"/>
</dbReference>
<protein>
    <recommendedName>
        <fullName evidence="1">Large ribosomal subunit protein uL2</fullName>
    </recommendedName>
    <alternativeName>
        <fullName evidence="3">50S ribosomal protein L2</fullName>
    </alternativeName>
</protein>
<evidence type="ECO:0000255" key="1">
    <source>
        <dbReference type="HAMAP-Rule" id="MF_01320"/>
    </source>
</evidence>
<evidence type="ECO:0000256" key="2">
    <source>
        <dbReference type="SAM" id="MobiDB-lite"/>
    </source>
</evidence>
<evidence type="ECO:0000305" key="3"/>
<name>RL2_KOCRD</name>
<reference key="1">
    <citation type="journal article" date="2008" name="J. Bacteriol.">
        <title>Complete genome sequence of the soil actinomycete Kocuria rhizophila.</title>
        <authorList>
            <person name="Takarada H."/>
            <person name="Sekine M."/>
            <person name="Kosugi H."/>
            <person name="Matsuo Y."/>
            <person name="Fujisawa T."/>
            <person name="Omata S."/>
            <person name="Kishi E."/>
            <person name="Shimizu A."/>
            <person name="Tsukatani N."/>
            <person name="Tanikawa S."/>
            <person name="Fujita N."/>
            <person name="Harayama S."/>
        </authorList>
    </citation>
    <scope>NUCLEOTIDE SEQUENCE [LARGE SCALE GENOMIC DNA]</scope>
    <source>
        <strain>ATCC 9341 / DSM 348 / NBRC 103217 / DC2201</strain>
    </source>
</reference>
<keyword id="KW-1185">Reference proteome</keyword>
<keyword id="KW-0687">Ribonucleoprotein</keyword>
<keyword id="KW-0689">Ribosomal protein</keyword>
<keyword id="KW-0694">RNA-binding</keyword>
<keyword id="KW-0699">rRNA-binding</keyword>
<proteinExistence type="inferred from homology"/>
<sequence>MAIRKHKPTTPGRRGSSVADFVEITRTTPEKSLVRPLPKKGGRNNTGRITTRHKGGGHKRQYRVIDFRRHDKDGVDAKVAHIEYDPNRTARIALLHYVDGTKRYIIAPNRLQQGDVVESGPNADIKPGNNLPLRNIPVGTVLHAVELRPGGGAKLARSAGASVQLVAREGKYGQLRLPSGEIRNVDVRCRATIGEVGNAEQSNINWGKAGRNRWKGVRPTVRGVVMNPVDHPHGGGEGKTSGGRHPVNPNGKPEGRTRRPNKESDKLIVRRRRTGKNKR</sequence>